<dbReference type="EC" id="1.7.1.13" evidence="1"/>
<dbReference type="EMBL" id="AP009240">
    <property type="protein sequence ID" value="BAG78578.1"/>
    <property type="molecule type" value="Genomic_DNA"/>
</dbReference>
<dbReference type="RefSeq" id="WP_000100430.1">
    <property type="nucleotide sequence ID" value="NC_011415.1"/>
</dbReference>
<dbReference type="SMR" id="B6I6J2"/>
<dbReference type="GeneID" id="75203815"/>
<dbReference type="KEGG" id="ecy:ECSE_3054"/>
<dbReference type="HOGENOM" id="CLU_054738_0_0_6"/>
<dbReference type="UniPathway" id="UPA00392"/>
<dbReference type="Proteomes" id="UP000008199">
    <property type="component" value="Chromosome"/>
</dbReference>
<dbReference type="GO" id="GO:0005737">
    <property type="term" value="C:cytoplasm"/>
    <property type="evidence" value="ECO:0007669"/>
    <property type="project" value="UniProtKB-SubCell"/>
</dbReference>
<dbReference type="GO" id="GO:0033739">
    <property type="term" value="F:preQ1 synthase activity"/>
    <property type="evidence" value="ECO:0007669"/>
    <property type="project" value="UniProtKB-UniRule"/>
</dbReference>
<dbReference type="GO" id="GO:0008616">
    <property type="term" value="P:queuosine biosynthetic process"/>
    <property type="evidence" value="ECO:0007669"/>
    <property type="project" value="UniProtKB-UniRule"/>
</dbReference>
<dbReference type="GO" id="GO:0006400">
    <property type="term" value="P:tRNA modification"/>
    <property type="evidence" value="ECO:0007669"/>
    <property type="project" value="UniProtKB-UniRule"/>
</dbReference>
<dbReference type="FunFam" id="3.30.1130.10:FF:000004">
    <property type="entry name" value="NADPH-dependent 7-cyano-7-deazaguanine reductase"/>
    <property type="match status" value="1"/>
</dbReference>
<dbReference type="FunFam" id="3.30.1130.10:FF:000006">
    <property type="entry name" value="NADPH-dependent 7-cyano-7-deazaguanine reductase"/>
    <property type="match status" value="1"/>
</dbReference>
<dbReference type="Gene3D" id="3.30.1130.10">
    <property type="match status" value="2"/>
</dbReference>
<dbReference type="HAMAP" id="MF_00817">
    <property type="entry name" value="QueF_type2"/>
    <property type="match status" value="1"/>
</dbReference>
<dbReference type="InterPro" id="IPR043133">
    <property type="entry name" value="GTP-CH-I_C/QueF"/>
</dbReference>
<dbReference type="InterPro" id="IPR050084">
    <property type="entry name" value="NADPH_dep_7-cyano-7-deazaG_red"/>
</dbReference>
<dbReference type="InterPro" id="IPR029500">
    <property type="entry name" value="QueF"/>
</dbReference>
<dbReference type="InterPro" id="IPR029139">
    <property type="entry name" value="QueF_N"/>
</dbReference>
<dbReference type="InterPro" id="IPR016428">
    <property type="entry name" value="QueF_type2"/>
</dbReference>
<dbReference type="NCBIfam" id="TIGR03138">
    <property type="entry name" value="QueF"/>
    <property type="match status" value="1"/>
</dbReference>
<dbReference type="PANTHER" id="PTHR34354">
    <property type="entry name" value="NADPH-DEPENDENT 7-CYANO-7-DEAZAGUANINE REDUCTASE"/>
    <property type="match status" value="1"/>
</dbReference>
<dbReference type="PANTHER" id="PTHR34354:SF1">
    <property type="entry name" value="NADPH-DEPENDENT 7-CYANO-7-DEAZAGUANINE REDUCTASE"/>
    <property type="match status" value="1"/>
</dbReference>
<dbReference type="Pfam" id="PF14489">
    <property type="entry name" value="QueF"/>
    <property type="match status" value="1"/>
</dbReference>
<dbReference type="Pfam" id="PF14819">
    <property type="entry name" value="QueF_N"/>
    <property type="match status" value="1"/>
</dbReference>
<dbReference type="PIRSF" id="PIRSF004750">
    <property type="entry name" value="Nitrile_oxidored_YqcD_prd"/>
    <property type="match status" value="1"/>
</dbReference>
<dbReference type="SUPFAM" id="SSF55620">
    <property type="entry name" value="Tetrahydrobiopterin biosynthesis enzymes-like"/>
    <property type="match status" value="1"/>
</dbReference>
<accession>B6I6J2</accession>
<evidence type="ECO:0000255" key="1">
    <source>
        <dbReference type="HAMAP-Rule" id="MF_00817"/>
    </source>
</evidence>
<proteinExistence type="inferred from homology"/>
<name>QUEF_ECOSE</name>
<feature type="chain" id="PRO_1000213065" description="NADPH-dependent 7-cyano-7-deazaguanine reductase">
    <location>
        <begin position="1"/>
        <end position="282"/>
    </location>
</feature>
<feature type="active site" description="Thioimide intermediate" evidence="1">
    <location>
        <position position="190"/>
    </location>
</feature>
<feature type="active site" description="Proton donor" evidence="1">
    <location>
        <position position="197"/>
    </location>
</feature>
<feature type="binding site" evidence="1">
    <location>
        <begin position="88"/>
        <end position="90"/>
    </location>
    <ligand>
        <name>substrate</name>
    </ligand>
</feature>
<feature type="binding site" evidence="1">
    <location>
        <begin position="90"/>
        <end position="91"/>
    </location>
    <ligand>
        <name>NADPH</name>
        <dbReference type="ChEBI" id="CHEBI:57783"/>
    </ligand>
</feature>
<feature type="binding site" evidence="1">
    <location>
        <begin position="229"/>
        <end position="230"/>
    </location>
    <ligand>
        <name>substrate</name>
    </ligand>
</feature>
<feature type="binding site" evidence="1">
    <location>
        <begin position="258"/>
        <end position="259"/>
    </location>
    <ligand>
        <name>NADPH</name>
        <dbReference type="ChEBI" id="CHEBI:57783"/>
    </ligand>
</feature>
<comment type="function">
    <text evidence="1">Catalyzes the NADPH-dependent reduction of 7-cyano-7-deazaguanine (preQ0) to 7-aminomethyl-7-deazaguanine (preQ1).</text>
</comment>
<comment type="catalytic activity">
    <reaction evidence="1">
        <text>7-aminomethyl-7-carbaguanine + 2 NADP(+) = 7-cyano-7-deazaguanine + 2 NADPH + 3 H(+)</text>
        <dbReference type="Rhea" id="RHEA:13409"/>
        <dbReference type="ChEBI" id="CHEBI:15378"/>
        <dbReference type="ChEBI" id="CHEBI:45075"/>
        <dbReference type="ChEBI" id="CHEBI:57783"/>
        <dbReference type="ChEBI" id="CHEBI:58349"/>
        <dbReference type="ChEBI" id="CHEBI:58703"/>
        <dbReference type="EC" id="1.7.1.13"/>
    </reaction>
</comment>
<comment type="pathway">
    <text evidence="1">tRNA modification; tRNA-queuosine biosynthesis.</text>
</comment>
<comment type="subunit">
    <text evidence="1">Homodimer.</text>
</comment>
<comment type="subcellular location">
    <subcellularLocation>
        <location evidence="1">Cytoplasm</location>
    </subcellularLocation>
</comment>
<comment type="similarity">
    <text evidence="1">Belongs to the GTP cyclohydrolase I family. QueF type 2 subfamily.</text>
</comment>
<keyword id="KW-0963">Cytoplasm</keyword>
<keyword id="KW-0521">NADP</keyword>
<keyword id="KW-0560">Oxidoreductase</keyword>
<keyword id="KW-0671">Queuosine biosynthesis</keyword>
<sequence>MSSYANHQALAGLTLGKSTDYRDTYDASLLQGVPRSLNRDPLGLKADNLPFHGTDIWTLYELSWLNAKGLPQVAVGHVELDYTSVNLIESKSFKLYLNSFNQTRFNNWDEVRQTLERDLSTCAQGKVSVALYRLDELEGQPIGHFNGTCIDDQDITIDNYEFTTDYLENATSGEKVVEETLVSHLLKSNCLITHQPDWGSIQIQYRGRQIDREKLLRYLVSFRHHNEFHEQCVERIFNDLLRFCQPEKLSVYARYTRRGGLDINPWRSNSDFVPSTTRLVRQ</sequence>
<gene>
    <name evidence="1" type="primary">queF</name>
    <name type="ordered locus">ECSE_3054</name>
</gene>
<reference key="1">
    <citation type="journal article" date="2008" name="DNA Res.">
        <title>Complete genome sequence and comparative analysis of the wild-type commensal Escherichia coli strain SE11 isolated from a healthy adult.</title>
        <authorList>
            <person name="Oshima K."/>
            <person name="Toh H."/>
            <person name="Ogura Y."/>
            <person name="Sasamoto H."/>
            <person name="Morita H."/>
            <person name="Park S.-H."/>
            <person name="Ooka T."/>
            <person name="Iyoda S."/>
            <person name="Taylor T.D."/>
            <person name="Hayashi T."/>
            <person name="Itoh K."/>
            <person name="Hattori M."/>
        </authorList>
    </citation>
    <scope>NUCLEOTIDE SEQUENCE [LARGE SCALE GENOMIC DNA]</scope>
    <source>
        <strain>SE11</strain>
    </source>
</reference>
<protein>
    <recommendedName>
        <fullName evidence="1">NADPH-dependent 7-cyano-7-deazaguanine reductase</fullName>
        <ecNumber evidence="1">1.7.1.13</ecNumber>
    </recommendedName>
    <alternativeName>
        <fullName evidence="1">7-cyano-7-carbaguanine reductase</fullName>
    </alternativeName>
    <alternativeName>
        <fullName evidence="1">NADPH-dependent nitrile oxidoreductase</fullName>
    </alternativeName>
    <alternativeName>
        <fullName evidence="1">PreQ(0) reductase</fullName>
    </alternativeName>
</protein>
<organism>
    <name type="scientific">Escherichia coli (strain SE11)</name>
    <dbReference type="NCBI Taxonomy" id="409438"/>
    <lineage>
        <taxon>Bacteria</taxon>
        <taxon>Pseudomonadati</taxon>
        <taxon>Pseudomonadota</taxon>
        <taxon>Gammaproteobacteria</taxon>
        <taxon>Enterobacterales</taxon>
        <taxon>Enterobacteriaceae</taxon>
        <taxon>Escherichia</taxon>
    </lineage>
</organism>